<comment type="function">
    <text evidence="1">Catalyzes the oxidation of either pyridoxine 5'-phosphate (PNP) or pyridoxamine 5'-phosphate (PMP) into pyridoxal 5'-phosphate (PLP).</text>
</comment>
<comment type="catalytic activity">
    <reaction evidence="1">
        <text>pyridoxamine 5'-phosphate + O2 + H2O = pyridoxal 5'-phosphate + H2O2 + NH4(+)</text>
        <dbReference type="Rhea" id="RHEA:15817"/>
        <dbReference type="ChEBI" id="CHEBI:15377"/>
        <dbReference type="ChEBI" id="CHEBI:15379"/>
        <dbReference type="ChEBI" id="CHEBI:16240"/>
        <dbReference type="ChEBI" id="CHEBI:28938"/>
        <dbReference type="ChEBI" id="CHEBI:58451"/>
        <dbReference type="ChEBI" id="CHEBI:597326"/>
        <dbReference type="EC" id="1.4.3.5"/>
    </reaction>
</comment>
<comment type="catalytic activity">
    <reaction evidence="1">
        <text>pyridoxine 5'-phosphate + O2 = pyridoxal 5'-phosphate + H2O2</text>
        <dbReference type="Rhea" id="RHEA:15149"/>
        <dbReference type="ChEBI" id="CHEBI:15379"/>
        <dbReference type="ChEBI" id="CHEBI:16240"/>
        <dbReference type="ChEBI" id="CHEBI:58589"/>
        <dbReference type="ChEBI" id="CHEBI:597326"/>
        <dbReference type="EC" id="1.4.3.5"/>
    </reaction>
</comment>
<comment type="cofactor">
    <cofactor evidence="1">
        <name>FMN</name>
        <dbReference type="ChEBI" id="CHEBI:58210"/>
    </cofactor>
    <text evidence="1">Binds 1 FMN per subunit.</text>
</comment>
<comment type="pathway">
    <text evidence="1">Cofactor metabolism; pyridoxal 5'-phosphate salvage; pyridoxal 5'-phosphate from pyridoxamine 5'-phosphate: step 1/1.</text>
</comment>
<comment type="pathway">
    <text evidence="1">Cofactor metabolism; pyridoxal 5'-phosphate salvage; pyridoxal 5'-phosphate from pyridoxine 5'-phosphate: step 1/1.</text>
</comment>
<comment type="subunit">
    <text evidence="1">Homodimer.</text>
</comment>
<comment type="similarity">
    <text evidence="1">Belongs to the pyridoxamine 5'-phosphate oxidase family.</text>
</comment>
<protein>
    <recommendedName>
        <fullName evidence="1">Pyridoxine/pyridoxamine 5'-phosphate oxidase</fullName>
        <ecNumber evidence="1">1.4.3.5</ecNumber>
    </recommendedName>
    <alternativeName>
        <fullName evidence="1">PNP/PMP oxidase</fullName>
        <shortName evidence="1">PNPOx</shortName>
    </alternativeName>
    <alternativeName>
        <fullName evidence="1">Pyridoxal 5'-phosphate synthase</fullName>
    </alternativeName>
</protein>
<organism>
    <name type="scientific">Hyphomonas neptunium (strain ATCC 15444)</name>
    <dbReference type="NCBI Taxonomy" id="228405"/>
    <lineage>
        <taxon>Bacteria</taxon>
        <taxon>Pseudomonadati</taxon>
        <taxon>Pseudomonadota</taxon>
        <taxon>Alphaproteobacteria</taxon>
        <taxon>Hyphomonadales</taxon>
        <taxon>Hyphomonadaceae</taxon>
        <taxon>Hyphomonas</taxon>
    </lineage>
</organism>
<proteinExistence type="inferred from homology"/>
<gene>
    <name evidence="1" type="primary">pdxH</name>
    <name type="ordered locus">HNE_0824</name>
</gene>
<feature type="chain" id="PRO_0000292297" description="Pyridoxine/pyridoxamine 5'-phosphate oxidase">
    <location>
        <begin position="1"/>
        <end position="219"/>
    </location>
</feature>
<feature type="region of interest" description="Disordered" evidence="2">
    <location>
        <begin position="1"/>
        <end position="23"/>
    </location>
</feature>
<feature type="binding site" evidence="1">
    <location>
        <begin position="66"/>
        <end position="71"/>
    </location>
    <ligand>
        <name>FMN</name>
        <dbReference type="ChEBI" id="CHEBI:58210"/>
    </ligand>
</feature>
<feature type="binding site" evidence="1">
    <location>
        <position position="71"/>
    </location>
    <ligand>
        <name>substrate</name>
    </ligand>
</feature>
<feature type="binding site" evidence="1">
    <location>
        <begin position="81"/>
        <end position="82"/>
    </location>
    <ligand>
        <name>FMN</name>
        <dbReference type="ChEBI" id="CHEBI:58210"/>
    </ligand>
</feature>
<feature type="binding site" evidence="1">
    <location>
        <position position="88"/>
    </location>
    <ligand>
        <name>FMN</name>
        <dbReference type="ChEBI" id="CHEBI:58210"/>
    </ligand>
</feature>
<feature type="binding site" evidence="1">
    <location>
        <position position="110"/>
    </location>
    <ligand>
        <name>FMN</name>
        <dbReference type="ChEBI" id="CHEBI:58210"/>
    </ligand>
</feature>
<feature type="binding site" evidence="1">
    <location>
        <position position="128"/>
    </location>
    <ligand>
        <name>substrate</name>
    </ligand>
</feature>
<feature type="binding site" evidence="1">
    <location>
        <position position="132"/>
    </location>
    <ligand>
        <name>substrate</name>
    </ligand>
</feature>
<feature type="binding site" evidence="1">
    <location>
        <position position="136"/>
    </location>
    <ligand>
        <name>substrate</name>
    </ligand>
</feature>
<feature type="binding site" evidence="1">
    <location>
        <begin position="145"/>
        <end position="146"/>
    </location>
    <ligand>
        <name>FMN</name>
        <dbReference type="ChEBI" id="CHEBI:58210"/>
    </ligand>
</feature>
<feature type="binding site" evidence="1">
    <location>
        <position position="191"/>
    </location>
    <ligand>
        <name>FMN</name>
        <dbReference type="ChEBI" id="CHEBI:58210"/>
    </ligand>
</feature>
<feature type="binding site" evidence="1">
    <location>
        <begin position="197"/>
        <end position="199"/>
    </location>
    <ligand>
        <name>substrate</name>
    </ligand>
</feature>
<feature type="binding site" evidence="1">
    <location>
        <position position="201"/>
    </location>
    <ligand>
        <name>FMN</name>
        <dbReference type="ChEBI" id="CHEBI:58210"/>
    </ligand>
</feature>
<accession>Q0C3Z2</accession>
<sequence length="219" mass="24153">MTSSVIPPSPSAADYAAEGDRPLVPETDNPIGLFQDWMAQARASEPNDSNAMSLATVDADGRPDVRIVLLKGVDSEGFTFFTNLESVKGVQLAANPVAALCFHWKSQRRQVRVRGGVAPVSAAEADAYFASRAAQSRISAIASDQSRPLADRAIFEQRVAEISSVYGDDNDIPRPPHWGGFRLVPTEIEFWQDQAFRMHDRLRFYRKADGGWATVRLYP</sequence>
<reference key="1">
    <citation type="journal article" date="2006" name="J. Bacteriol.">
        <title>Comparative genomic evidence for a close relationship between the dimorphic prosthecate bacteria Hyphomonas neptunium and Caulobacter crescentus.</title>
        <authorList>
            <person name="Badger J.H."/>
            <person name="Hoover T.R."/>
            <person name="Brun Y.V."/>
            <person name="Weiner R.M."/>
            <person name="Laub M.T."/>
            <person name="Alexandre G."/>
            <person name="Mrazek J."/>
            <person name="Ren Q."/>
            <person name="Paulsen I.T."/>
            <person name="Nelson K.E."/>
            <person name="Khouri H.M."/>
            <person name="Radune D."/>
            <person name="Sosa J."/>
            <person name="Dodson R.J."/>
            <person name="Sullivan S.A."/>
            <person name="Rosovitz M.J."/>
            <person name="Madupu R."/>
            <person name="Brinkac L.M."/>
            <person name="Durkin A.S."/>
            <person name="Daugherty S.C."/>
            <person name="Kothari S.P."/>
            <person name="Giglio M.G."/>
            <person name="Zhou L."/>
            <person name="Haft D.H."/>
            <person name="Selengut J.D."/>
            <person name="Davidsen T.M."/>
            <person name="Yang Q."/>
            <person name="Zafar N."/>
            <person name="Ward N.L."/>
        </authorList>
    </citation>
    <scope>NUCLEOTIDE SEQUENCE [LARGE SCALE GENOMIC DNA]</scope>
    <source>
        <strain>ATCC 15444</strain>
    </source>
</reference>
<keyword id="KW-0285">Flavoprotein</keyword>
<keyword id="KW-0288">FMN</keyword>
<keyword id="KW-0560">Oxidoreductase</keyword>
<keyword id="KW-0664">Pyridoxine biosynthesis</keyword>
<keyword id="KW-1185">Reference proteome</keyword>
<name>PDXH_HYPNA</name>
<dbReference type="EC" id="1.4.3.5" evidence="1"/>
<dbReference type="EMBL" id="CP000158">
    <property type="protein sequence ID" value="ABI76545.1"/>
    <property type="molecule type" value="Genomic_DNA"/>
</dbReference>
<dbReference type="RefSeq" id="WP_011645851.1">
    <property type="nucleotide sequence ID" value="NC_008358.1"/>
</dbReference>
<dbReference type="SMR" id="Q0C3Z2"/>
<dbReference type="STRING" id="228405.HNE_0824"/>
<dbReference type="KEGG" id="hne:HNE_0824"/>
<dbReference type="eggNOG" id="COG0259">
    <property type="taxonomic scope" value="Bacteria"/>
</dbReference>
<dbReference type="HOGENOM" id="CLU_032263_2_3_5"/>
<dbReference type="UniPathway" id="UPA01068">
    <property type="reaction ID" value="UER00304"/>
</dbReference>
<dbReference type="UniPathway" id="UPA01068">
    <property type="reaction ID" value="UER00305"/>
</dbReference>
<dbReference type="Proteomes" id="UP000001959">
    <property type="component" value="Chromosome"/>
</dbReference>
<dbReference type="GO" id="GO:0010181">
    <property type="term" value="F:FMN binding"/>
    <property type="evidence" value="ECO:0007669"/>
    <property type="project" value="UniProtKB-UniRule"/>
</dbReference>
<dbReference type="GO" id="GO:0004733">
    <property type="term" value="F:pyridoxamine phosphate oxidase activity"/>
    <property type="evidence" value="ECO:0007669"/>
    <property type="project" value="UniProtKB-UniRule"/>
</dbReference>
<dbReference type="GO" id="GO:0008615">
    <property type="term" value="P:pyridoxine biosynthetic process"/>
    <property type="evidence" value="ECO:0007669"/>
    <property type="project" value="UniProtKB-KW"/>
</dbReference>
<dbReference type="Gene3D" id="2.30.110.10">
    <property type="entry name" value="Electron Transport, Fmn-binding Protein, Chain A"/>
    <property type="match status" value="1"/>
</dbReference>
<dbReference type="HAMAP" id="MF_01629">
    <property type="entry name" value="PdxH"/>
    <property type="match status" value="1"/>
</dbReference>
<dbReference type="InterPro" id="IPR000659">
    <property type="entry name" value="Pyridox_Oxase"/>
</dbReference>
<dbReference type="InterPro" id="IPR019740">
    <property type="entry name" value="Pyridox_Oxase_CS"/>
</dbReference>
<dbReference type="InterPro" id="IPR011576">
    <property type="entry name" value="Pyridox_Oxase_N"/>
</dbReference>
<dbReference type="InterPro" id="IPR019576">
    <property type="entry name" value="Pyridoxamine_oxidase_dimer_C"/>
</dbReference>
<dbReference type="InterPro" id="IPR012349">
    <property type="entry name" value="Split_barrel_FMN-bd"/>
</dbReference>
<dbReference type="NCBIfam" id="TIGR00558">
    <property type="entry name" value="pdxH"/>
    <property type="match status" value="1"/>
</dbReference>
<dbReference type="NCBIfam" id="NF004231">
    <property type="entry name" value="PRK05679.1"/>
    <property type="match status" value="1"/>
</dbReference>
<dbReference type="PANTHER" id="PTHR10851:SF0">
    <property type="entry name" value="PYRIDOXINE-5'-PHOSPHATE OXIDASE"/>
    <property type="match status" value="1"/>
</dbReference>
<dbReference type="PANTHER" id="PTHR10851">
    <property type="entry name" value="PYRIDOXINE-5-PHOSPHATE OXIDASE"/>
    <property type="match status" value="1"/>
</dbReference>
<dbReference type="Pfam" id="PF10590">
    <property type="entry name" value="PNP_phzG_C"/>
    <property type="match status" value="1"/>
</dbReference>
<dbReference type="Pfam" id="PF01243">
    <property type="entry name" value="PNPOx_N"/>
    <property type="match status" value="1"/>
</dbReference>
<dbReference type="PIRSF" id="PIRSF000190">
    <property type="entry name" value="Pyd_amn-ph_oxd"/>
    <property type="match status" value="1"/>
</dbReference>
<dbReference type="SUPFAM" id="SSF50475">
    <property type="entry name" value="FMN-binding split barrel"/>
    <property type="match status" value="1"/>
</dbReference>
<dbReference type="PROSITE" id="PS01064">
    <property type="entry name" value="PYRIDOX_OXIDASE"/>
    <property type="match status" value="1"/>
</dbReference>
<evidence type="ECO:0000255" key="1">
    <source>
        <dbReference type="HAMAP-Rule" id="MF_01629"/>
    </source>
</evidence>
<evidence type="ECO:0000256" key="2">
    <source>
        <dbReference type="SAM" id="MobiDB-lite"/>
    </source>
</evidence>